<keyword id="KW-0903">Direct protein sequencing</keyword>
<keyword id="KW-1015">Disulfide bond</keyword>
<keyword id="KW-0325">Glycoprotein</keyword>
<keyword id="KW-0372">Hormone</keyword>
<keyword id="KW-1185">Reference proteome</keyword>
<keyword id="KW-0964">Secreted</keyword>
<keyword id="KW-0732">Signal</keyword>
<evidence type="ECO:0000250" key="1"/>
<evidence type="ECO:0000255" key="2"/>
<evidence type="ECO:0000269" key="3">
    <source>
    </source>
</evidence>
<evidence type="ECO:0000305" key="4"/>
<protein>
    <recommendedName>
        <fullName>Prolactin-3D4</fullName>
    </recommendedName>
    <alternativeName>
        <fullName>Chorionic somatomammotropin hormone 1 variant</fullName>
    </alternativeName>
    <alternativeName>
        <fullName>Placental lactogen I variant</fullName>
        <shortName>PL-IV</shortName>
    </alternativeName>
</protein>
<comment type="subcellular location">
    <subcellularLocation>
        <location>Secreted</location>
    </subcellularLocation>
</comment>
<comment type="developmental stage">
    <text>Predominantly synthesized during the later stage of gestation.</text>
</comment>
<comment type="PTM">
    <text>N-glycosylated.</text>
</comment>
<comment type="similarity">
    <text evidence="4">Belongs to the somatotropin/prolactin family.</text>
</comment>
<proteinExistence type="evidence at protein level"/>
<accession>P34207</accession>
<accession>Q4QRA7</accession>
<reference key="1">
    <citation type="submission" date="1995-07" db="EMBL/GenBank/DDBJ databases">
        <authorList>
            <person name="Dai G."/>
            <person name="Deb S."/>
            <person name="Soares M.J."/>
        </authorList>
    </citation>
    <scope>NUCLEOTIDE SEQUENCE [MRNA]</scope>
    <source>
        <strain>Sprague-Dawley</strain>
        <tissue>Placenta</tissue>
    </source>
</reference>
<reference key="2">
    <citation type="journal article" date="2004" name="Genome Res.">
        <title>The status, quality, and expansion of the NIH full-length cDNA project: the Mammalian Gene Collection (MGC).</title>
        <authorList>
            <consortium name="The MGC Project Team"/>
        </authorList>
    </citation>
    <scope>NUCLEOTIDE SEQUENCE [LARGE SCALE MRNA]</scope>
    <source>
        <tissue>Placenta</tissue>
    </source>
</reference>
<reference key="3">
    <citation type="journal article" date="1991" name="J. Biol. Chem.">
        <title>Identification and characterization of a new member of the prolactin family, placental lactogen-I variant.</title>
        <authorList>
            <person name="Deb S."/>
            <person name="Faria T.N."/>
            <person name="Roby K.F."/>
            <person name="Larsen D."/>
            <person name="Kwok S.C.M."/>
            <person name="Talamantes F."/>
            <person name="Soares M.J."/>
        </authorList>
    </citation>
    <scope>PROTEIN SEQUENCE OF 29-73</scope>
    <source>
        <tissue>Placenta</tissue>
    </source>
</reference>
<dbReference type="EMBL" id="U32679">
    <property type="protein sequence ID" value="AAC52427.1"/>
    <property type="molecule type" value="mRNA"/>
</dbReference>
<dbReference type="EMBL" id="BC097302">
    <property type="protein sequence ID" value="AAH97302.1"/>
    <property type="molecule type" value="mRNA"/>
</dbReference>
<dbReference type="PIR" id="A38666">
    <property type="entry name" value="A38666"/>
</dbReference>
<dbReference type="PIR" id="A49160">
    <property type="entry name" value="A49160"/>
</dbReference>
<dbReference type="RefSeq" id="NP_150236.1">
    <property type="nucleotide sequence ID" value="NM_033233.1"/>
</dbReference>
<dbReference type="RefSeq" id="XP_008769896.1">
    <property type="nucleotide sequence ID" value="XM_008771674.2"/>
</dbReference>
<dbReference type="SMR" id="P34207"/>
<dbReference type="STRING" id="10116.ENSRNOP00000068935"/>
<dbReference type="GlyCosmos" id="P34207">
    <property type="glycosylation" value="2 sites, No reported glycans"/>
</dbReference>
<dbReference type="GlyGen" id="P34207">
    <property type="glycosylation" value="2 sites"/>
</dbReference>
<dbReference type="PaxDb" id="10116-ENSRNOP00000022512"/>
<dbReference type="Ensembl" id="ENSRNOT00000082821.2">
    <property type="protein sequence ID" value="ENSRNOP00000068935.1"/>
    <property type="gene ID" value="ENSRNOG00000016792.6"/>
</dbReference>
<dbReference type="GeneID" id="24282"/>
<dbReference type="KEGG" id="rno:24282"/>
<dbReference type="UCSC" id="RGD:2428">
    <property type="organism name" value="rat"/>
</dbReference>
<dbReference type="AGR" id="RGD:2428"/>
<dbReference type="CTD" id="24282"/>
<dbReference type="RGD" id="2428">
    <property type="gene designation" value="Prl3d4"/>
</dbReference>
<dbReference type="eggNOG" id="ENOG502QYU3">
    <property type="taxonomic scope" value="Eukaryota"/>
</dbReference>
<dbReference type="GeneTree" id="ENSGT00950000182818"/>
<dbReference type="InParanoid" id="P34207"/>
<dbReference type="OMA" id="CHTSNIV"/>
<dbReference type="OrthoDB" id="9946219at2759"/>
<dbReference type="PhylomeDB" id="P34207"/>
<dbReference type="TreeFam" id="TF332592"/>
<dbReference type="PRO" id="PR:P34207"/>
<dbReference type="Proteomes" id="UP000002494">
    <property type="component" value="Chromosome 17"/>
</dbReference>
<dbReference type="ExpressionAtlas" id="P34207">
    <property type="expression patterns" value="baseline"/>
</dbReference>
<dbReference type="GO" id="GO:0005615">
    <property type="term" value="C:extracellular space"/>
    <property type="evidence" value="ECO:0000318"/>
    <property type="project" value="GO_Central"/>
</dbReference>
<dbReference type="GO" id="GO:0005179">
    <property type="term" value="F:hormone activity"/>
    <property type="evidence" value="ECO:0000318"/>
    <property type="project" value="GO_Central"/>
</dbReference>
<dbReference type="GO" id="GO:0005148">
    <property type="term" value="F:prolactin receptor binding"/>
    <property type="evidence" value="ECO:0000315"/>
    <property type="project" value="RGD"/>
</dbReference>
<dbReference type="GO" id="GO:0007166">
    <property type="term" value="P:cell surface receptor signaling pathway"/>
    <property type="evidence" value="ECO:0000318"/>
    <property type="project" value="GO_Central"/>
</dbReference>
<dbReference type="GO" id="GO:0007565">
    <property type="term" value="P:female pregnancy"/>
    <property type="evidence" value="ECO:0000318"/>
    <property type="project" value="GO_Central"/>
</dbReference>
<dbReference type="GO" id="GO:0030879">
    <property type="term" value="P:mammary gland development"/>
    <property type="evidence" value="ECO:0000318"/>
    <property type="project" value="GO_Central"/>
</dbReference>
<dbReference type="GO" id="GO:0008284">
    <property type="term" value="P:positive regulation of cell population proliferation"/>
    <property type="evidence" value="ECO:0000315"/>
    <property type="project" value="RGD"/>
</dbReference>
<dbReference type="GO" id="GO:1903489">
    <property type="term" value="P:positive regulation of lactation"/>
    <property type="evidence" value="ECO:0000318"/>
    <property type="project" value="GO_Central"/>
</dbReference>
<dbReference type="GO" id="GO:0046427">
    <property type="term" value="P:positive regulation of receptor signaling pathway via JAK-STAT"/>
    <property type="evidence" value="ECO:0000318"/>
    <property type="project" value="GO_Central"/>
</dbReference>
<dbReference type="GO" id="GO:0031667">
    <property type="term" value="P:response to nutrient levels"/>
    <property type="evidence" value="ECO:0000318"/>
    <property type="project" value="GO_Central"/>
</dbReference>
<dbReference type="CDD" id="cd10288">
    <property type="entry name" value="prolactin_like"/>
    <property type="match status" value="1"/>
</dbReference>
<dbReference type="FunFam" id="1.20.1250.10:FF:000043">
    <property type="entry name" value="Growth hormone d5"/>
    <property type="match status" value="1"/>
</dbReference>
<dbReference type="Gene3D" id="1.20.1250.10">
    <property type="match status" value="1"/>
</dbReference>
<dbReference type="InterPro" id="IPR009079">
    <property type="entry name" value="4_helix_cytokine-like_core"/>
</dbReference>
<dbReference type="InterPro" id="IPR001400">
    <property type="entry name" value="Somatotropin/Prolactin"/>
</dbReference>
<dbReference type="InterPro" id="IPR018116">
    <property type="entry name" value="Somatotropin_CS"/>
</dbReference>
<dbReference type="PANTHER" id="PTHR11417:SF31">
    <property type="entry name" value="GROWTH HORMONE D5-RELATED"/>
    <property type="match status" value="1"/>
</dbReference>
<dbReference type="PANTHER" id="PTHR11417">
    <property type="entry name" value="SOMATOTROPIN,PROLACTIN"/>
    <property type="match status" value="1"/>
</dbReference>
<dbReference type="Pfam" id="PF00103">
    <property type="entry name" value="Hormone_1"/>
    <property type="match status" value="1"/>
</dbReference>
<dbReference type="PRINTS" id="PR00836">
    <property type="entry name" value="SOMATOTROPIN"/>
</dbReference>
<dbReference type="SUPFAM" id="SSF47266">
    <property type="entry name" value="4-helical cytokines"/>
    <property type="match status" value="1"/>
</dbReference>
<dbReference type="PROSITE" id="PS00266">
    <property type="entry name" value="SOMATOTROPIN_1"/>
    <property type="match status" value="1"/>
</dbReference>
<dbReference type="PROSITE" id="PS00338">
    <property type="entry name" value="SOMATOTROPIN_2"/>
    <property type="match status" value="1"/>
</dbReference>
<organism>
    <name type="scientific">Rattus norvegicus</name>
    <name type="common">Rat</name>
    <dbReference type="NCBI Taxonomy" id="10116"/>
    <lineage>
        <taxon>Eukaryota</taxon>
        <taxon>Metazoa</taxon>
        <taxon>Chordata</taxon>
        <taxon>Craniata</taxon>
        <taxon>Vertebrata</taxon>
        <taxon>Euteleostomi</taxon>
        <taxon>Mammalia</taxon>
        <taxon>Eutheria</taxon>
        <taxon>Euarchontoglires</taxon>
        <taxon>Glires</taxon>
        <taxon>Rodentia</taxon>
        <taxon>Myomorpha</taxon>
        <taxon>Muroidea</taxon>
        <taxon>Muridae</taxon>
        <taxon>Murinae</taxon>
        <taxon>Rattus</taxon>
    </lineage>
</organism>
<sequence>MQLTLTLSGSSMQLLLLVSNLLLWENMASKPTVLVSTEDLYHRLVEQSHNTFIKAADVYREFDINFAKRSWMKDRILPLCHTASIHVPENREEVHEIKTEDLLRSIINISVSWKEPLKHFVSAVTDLPGASASMRKKAVDMKDKNLIILEGLQKIFNRTQTKVEENENFDYPAWSGLKDLQSSDEDTHLFAIYNLCRCFKSDIHKIDTYLKVLRCRVVFKNEC</sequence>
<name>PR3D4_RAT</name>
<feature type="signal peptide" evidence="3">
    <location>
        <begin position="1"/>
        <end position="28"/>
    </location>
</feature>
<feature type="chain" id="PRO_0000032964" description="Prolactin-3D4">
    <location>
        <begin position="29"/>
        <end position="223"/>
    </location>
</feature>
<feature type="glycosylation site" description="N-linked (GlcNAc...) asparagine" evidence="2">
    <location>
        <position position="108"/>
    </location>
</feature>
<feature type="glycosylation site" description="N-linked (GlcNAc...) asparagine" evidence="2">
    <location>
        <position position="157"/>
    </location>
</feature>
<feature type="disulfide bond" evidence="1">
    <location>
        <begin position="80"/>
        <end position="198"/>
    </location>
</feature>
<feature type="disulfide bond" evidence="1">
    <location>
        <begin position="215"/>
        <end position="223"/>
    </location>
</feature>
<gene>
    <name type="primary">Prl3d4</name>
    <name type="synonym">Csh1v</name>
</gene>